<dbReference type="EMBL" id="AE005174">
    <property type="protein sequence ID" value="AAG57669.1"/>
    <property type="molecule type" value="Genomic_DNA"/>
</dbReference>
<dbReference type="EMBL" id="BA000007">
    <property type="protein sequence ID" value="BAB36844.1"/>
    <property type="molecule type" value="Genomic_DNA"/>
</dbReference>
<dbReference type="PIR" id="E91056">
    <property type="entry name" value="E91056"/>
</dbReference>
<dbReference type="RefSeq" id="NP_311448.1">
    <property type="nucleotide sequence ID" value="NC_002695.1"/>
</dbReference>
<dbReference type="RefSeq" id="WP_001215861.1">
    <property type="nucleotide sequence ID" value="NZ_VOAI01000001.1"/>
</dbReference>
<dbReference type="PDB" id="7X6F">
    <property type="method" value="X-ray"/>
    <property type="resolution" value="2.30 A"/>
    <property type="chains" value="A/B/C/D/E/F=56-209"/>
</dbReference>
<dbReference type="PDB" id="7X6G">
    <property type="method" value="X-ray"/>
    <property type="resolution" value="2.35 A"/>
    <property type="chains" value="A/B/C/D/E/F=56-209"/>
</dbReference>
<dbReference type="PDB" id="7X6H">
    <property type="method" value="X-ray"/>
    <property type="resolution" value="2.60 A"/>
    <property type="chains" value="A/B/C/D=56-209"/>
</dbReference>
<dbReference type="PDBsum" id="7X6F"/>
<dbReference type="PDBsum" id="7X6G"/>
<dbReference type="PDBsum" id="7X6H"/>
<dbReference type="SMR" id="P0AD45"/>
<dbReference type="STRING" id="155864.Z3831"/>
<dbReference type="GeneID" id="914899"/>
<dbReference type="KEGG" id="ece:Z3831"/>
<dbReference type="KEGG" id="ecs:ECs_3421"/>
<dbReference type="PATRIC" id="fig|386585.9.peg.3575"/>
<dbReference type="eggNOG" id="COG3170">
    <property type="taxonomic scope" value="Bacteria"/>
</dbReference>
<dbReference type="HOGENOM" id="CLU_068067_1_0_6"/>
<dbReference type="OMA" id="SLYWLRA"/>
<dbReference type="PHI-base" id="PHI:9122"/>
<dbReference type="Proteomes" id="UP000000558">
    <property type="component" value="Chromosome"/>
</dbReference>
<dbReference type="Proteomes" id="UP000002519">
    <property type="component" value="Chromosome"/>
</dbReference>
<dbReference type="GO" id="GO:0009279">
    <property type="term" value="C:cell outer membrane"/>
    <property type="evidence" value="ECO:0007669"/>
    <property type="project" value="UniProtKB-SubCell"/>
</dbReference>
<dbReference type="InterPro" id="IPR025262">
    <property type="entry name" value="QseG"/>
</dbReference>
<dbReference type="NCBIfam" id="NF007997">
    <property type="entry name" value="PRK10722.1"/>
    <property type="match status" value="1"/>
</dbReference>
<dbReference type="Pfam" id="PF13942">
    <property type="entry name" value="Lipoprotein_20"/>
    <property type="match status" value="1"/>
</dbReference>
<dbReference type="PROSITE" id="PS51257">
    <property type="entry name" value="PROKAR_LIPOPROTEIN"/>
    <property type="match status" value="1"/>
</dbReference>
<sequence length="237" mass="27348">MRHIFQRLLPRRLWLAGLPCLALLGCVQNHNKPAIDTPAEEKIPVYQLADYLSTECSDIWALQGKSTETNPLYWLRAMDCADRLMPAQSRQQARQYDDGSWQNTFKQGILLADAKITPYERRQLVARIEALSTEIPAQVRPLYQLWRDGQALQLQLAEERQRYSKLQQSSDSELDTLRQQHHVLQQQLELTTRKLENLTDIERQLSTRKPAGNFSPDTPHESEKPAPSTHEVTPDEP</sequence>
<gene>
    <name type="primary">qseG</name>
    <name type="synonym">yfhG</name>
    <name type="ordered locus">Z3831</name>
    <name type="ordered locus">ECs3421</name>
</gene>
<reference key="1">
    <citation type="journal article" date="2001" name="Nature">
        <title>Genome sequence of enterohaemorrhagic Escherichia coli O157:H7.</title>
        <authorList>
            <person name="Perna N.T."/>
            <person name="Plunkett G. III"/>
            <person name="Burland V."/>
            <person name="Mau B."/>
            <person name="Glasner J.D."/>
            <person name="Rose D.J."/>
            <person name="Mayhew G.F."/>
            <person name="Evans P.S."/>
            <person name="Gregor J."/>
            <person name="Kirkpatrick H.A."/>
            <person name="Posfai G."/>
            <person name="Hackett J."/>
            <person name="Klink S."/>
            <person name="Boutin A."/>
            <person name="Shao Y."/>
            <person name="Miller L."/>
            <person name="Grotbeck E.J."/>
            <person name="Davis N.W."/>
            <person name="Lim A."/>
            <person name="Dimalanta E.T."/>
            <person name="Potamousis K."/>
            <person name="Apodaca J."/>
            <person name="Anantharaman T.S."/>
            <person name="Lin J."/>
            <person name="Yen G."/>
            <person name="Schwartz D.C."/>
            <person name="Welch R.A."/>
            <person name="Blattner F.R."/>
        </authorList>
    </citation>
    <scope>NUCLEOTIDE SEQUENCE [LARGE SCALE GENOMIC DNA]</scope>
    <source>
        <strain>O157:H7 / EDL933 / ATCC 700927 / EHEC</strain>
    </source>
</reference>
<reference key="2">
    <citation type="journal article" date="2001" name="DNA Res.">
        <title>Complete genome sequence of enterohemorrhagic Escherichia coli O157:H7 and genomic comparison with a laboratory strain K-12.</title>
        <authorList>
            <person name="Hayashi T."/>
            <person name="Makino K."/>
            <person name="Ohnishi M."/>
            <person name="Kurokawa K."/>
            <person name="Ishii K."/>
            <person name="Yokoyama K."/>
            <person name="Han C.-G."/>
            <person name="Ohtsubo E."/>
            <person name="Nakayama K."/>
            <person name="Murata T."/>
            <person name="Tanaka M."/>
            <person name="Tobe T."/>
            <person name="Iida T."/>
            <person name="Takami H."/>
            <person name="Honda T."/>
            <person name="Sasakawa C."/>
            <person name="Ogasawara N."/>
            <person name="Yasunaga T."/>
            <person name="Kuhara S."/>
            <person name="Shiba T."/>
            <person name="Hattori M."/>
            <person name="Shinagawa H."/>
        </authorList>
    </citation>
    <scope>NUCLEOTIDE SEQUENCE [LARGE SCALE GENOMIC DNA]</scope>
    <source>
        <strain>O157:H7 / Sakai / RIMD 0509952 / EHEC</strain>
    </source>
</reference>
<reference key="3">
    <citation type="journal article" date="2009" name="Proc. Natl. Acad. Sci. U.S.A.">
        <title>The two-component system QseEF and the membrane protein QseG link adrenergic and stress sensing to bacterial pathogenesis.</title>
        <authorList>
            <person name="Reading N.C."/>
            <person name="Rasko D.A."/>
            <person name="Torres A.G."/>
            <person name="Sperandio V."/>
        </authorList>
    </citation>
    <scope>FUNCTION IN VIRULENCE</scope>
    <scope>SUBCELLULAR LOCATION</scope>
    <scope>DISRUPTION PHENOTYPE</scope>
    <scope>GENE NAME</scope>
    <source>
        <strain>O157:H7 / 86-24 / EHEC</strain>
    </source>
</reference>
<reference key="4">
    <citation type="journal article" date="2010" name="Microbiology">
        <title>A transcriptome study of the QseEF two-component system and the QseG membrane protein in enterohaemorrhagic Escherichia coli O157:H7.</title>
        <authorList>
            <person name="Reading N.C."/>
            <person name="Rasko D."/>
            <person name="Torres A.G."/>
            <person name="Sperandio V."/>
        </authorList>
    </citation>
    <scope>FUNCTION IN REGULATION</scope>
    <source>
        <strain>O157:H7 / 86-24 / EHEC</strain>
    </source>
</reference>
<name>QSEG_ECO57</name>
<comment type="function">
    <text evidence="3 4">Involved in the regulation of virulence and metabolism in EHEC. Required for pedestal formation in host epithelial cells during infection. Necessary for translocation of effector molecules into host epithelial cells, but is not involved in structural assembly of the type III secretion system (T3SS).</text>
</comment>
<comment type="subcellular location">
    <subcellularLocation>
        <location evidence="5">Cell outer membrane</location>
        <topology evidence="5">Lipid-anchor</topology>
    </subcellularLocation>
</comment>
<comment type="disruption phenotype">
    <text evidence="3">Mutants are unable to form pedestals.</text>
</comment>
<organism>
    <name type="scientific">Escherichia coli O157:H7</name>
    <dbReference type="NCBI Taxonomy" id="83334"/>
    <lineage>
        <taxon>Bacteria</taxon>
        <taxon>Pseudomonadati</taxon>
        <taxon>Pseudomonadota</taxon>
        <taxon>Gammaproteobacteria</taxon>
        <taxon>Enterobacterales</taxon>
        <taxon>Enterobacteriaceae</taxon>
        <taxon>Escherichia</taxon>
    </lineage>
</organism>
<accession>P0AD45</accession>
<accession>P37328</accession>
<accession>P76997</accession>
<feature type="signal peptide" evidence="1">
    <location>
        <begin position="1"/>
        <end position="25"/>
    </location>
</feature>
<feature type="chain" id="PRO_0000169250" description="Quorum-sensing regulator protein G">
    <location>
        <begin position="26"/>
        <end position="237"/>
    </location>
</feature>
<feature type="region of interest" description="Disordered" evidence="2">
    <location>
        <begin position="201"/>
        <end position="237"/>
    </location>
</feature>
<feature type="lipid moiety-binding region" description="N-palmitoyl cysteine" evidence="1">
    <location>
        <position position="26"/>
    </location>
</feature>
<feature type="lipid moiety-binding region" description="S-diacylglycerol cysteine" evidence="1">
    <location>
        <position position="26"/>
    </location>
</feature>
<feature type="helix" evidence="6">
    <location>
        <begin position="57"/>
        <end position="61"/>
    </location>
</feature>
<feature type="helix" evidence="6">
    <location>
        <begin position="65"/>
        <end position="68"/>
    </location>
</feature>
<feature type="helix" evidence="6">
    <location>
        <begin position="71"/>
        <end position="82"/>
    </location>
</feature>
<feature type="helix" evidence="6">
    <location>
        <begin position="86"/>
        <end position="93"/>
    </location>
</feature>
<feature type="helix" evidence="6">
    <location>
        <begin position="101"/>
        <end position="111"/>
    </location>
</feature>
<feature type="helix" evidence="6">
    <location>
        <begin position="118"/>
        <end position="130"/>
    </location>
</feature>
<feature type="helix" evidence="6">
    <location>
        <begin position="132"/>
        <end position="134"/>
    </location>
</feature>
<feature type="helix" evidence="6">
    <location>
        <begin position="137"/>
        <end position="139"/>
    </location>
</feature>
<feature type="helix" evidence="6">
    <location>
        <begin position="140"/>
        <end position="196"/>
    </location>
</feature>
<feature type="helix" evidence="6">
    <location>
        <begin position="200"/>
        <end position="204"/>
    </location>
</feature>
<protein>
    <recommendedName>
        <fullName>Quorum-sensing regulator protein G</fullName>
    </recommendedName>
</protein>
<keyword id="KW-0002">3D-structure</keyword>
<keyword id="KW-0998">Cell outer membrane</keyword>
<keyword id="KW-0449">Lipoprotein</keyword>
<keyword id="KW-0472">Membrane</keyword>
<keyword id="KW-0564">Palmitate</keyword>
<keyword id="KW-1185">Reference proteome</keyword>
<keyword id="KW-0732">Signal</keyword>
<evidence type="ECO:0000255" key="1">
    <source>
        <dbReference type="PROSITE-ProRule" id="PRU00303"/>
    </source>
</evidence>
<evidence type="ECO:0000256" key="2">
    <source>
        <dbReference type="SAM" id="MobiDB-lite"/>
    </source>
</evidence>
<evidence type="ECO:0000269" key="3">
    <source>
    </source>
</evidence>
<evidence type="ECO:0000269" key="4">
    <source>
    </source>
</evidence>
<evidence type="ECO:0000305" key="5">
    <source>
    </source>
</evidence>
<evidence type="ECO:0007829" key="6">
    <source>
        <dbReference type="PDB" id="7X6F"/>
    </source>
</evidence>
<proteinExistence type="evidence at protein level"/>